<evidence type="ECO:0000256" key="1">
    <source>
        <dbReference type="SAM" id="MobiDB-lite"/>
    </source>
</evidence>
<evidence type="ECO:0000305" key="2"/>
<keyword id="KW-0418">Kinase</keyword>
<keyword id="KW-1185">Reference proteome</keyword>
<keyword id="KW-0723">Serine/threonine-protein kinase</keyword>
<keyword id="KW-0808">Transferase</keyword>
<accession>Q55EU4</accession>
<comment type="similarity">
    <text evidence="2">Belongs to the protein kinase superfamily. AFK Ser/Thr protein kinase family.</text>
</comment>
<name>Y6874_DICDI</name>
<feature type="chain" id="PRO_0000367580" description="Putative actin-fragmin kinase DDB_G0268748">
    <location>
        <begin position="1"/>
        <end position="436"/>
    </location>
</feature>
<feature type="region of interest" description="Disordered" evidence="1">
    <location>
        <begin position="14"/>
        <end position="58"/>
    </location>
</feature>
<feature type="compositionally biased region" description="Low complexity" evidence="1">
    <location>
        <begin position="18"/>
        <end position="57"/>
    </location>
</feature>
<dbReference type="EC" id="2.7.11.-"/>
<dbReference type="EMBL" id="AAFI02000004">
    <property type="protein sequence ID" value="EAL72963.1"/>
    <property type="molecule type" value="Genomic_DNA"/>
</dbReference>
<dbReference type="RefSeq" id="XP_646926.1">
    <property type="nucleotide sequence ID" value="XM_641834.1"/>
</dbReference>
<dbReference type="SMR" id="Q55EU4"/>
<dbReference type="FunCoup" id="Q55EU4">
    <property type="interactions" value="1"/>
</dbReference>
<dbReference type="PaxDb" id="44689-DDB0233255"/>
<dbReference type="EnsemblProtists" id="EAL72963">
    <property type="protein sequence ID" value="EAL72963"/>
    <property type="gene ID" value="DDB_G0268748"/>
</dbReference>
<dbReference type="GeneID" id="8616614"/>
<dbReference type="KEGG" id="ddi:DDB_G0268748"/>
<dbReference type="dictyBase" id="DDB_G0268748"/>
<dbReference type="VEuPathDB" id="AmoebaDB:DDB_G0268748"/>
<dbReference type="eggNOG" id="ENOG502RDNC">
    <property type="taxonomic scope" value="Eukaryota"/>
</dbReference>
<dbReference type="HOGENOM" id="CLU_054301_0_0_1"/>
<dbReference type="InParanoid" id="Q55EU4"/>
<dbReference type="OMA" id="NWDENTF"/>
<dbReference type="PhylomeDB" id="Q55EU4"/>
<dbReference type="PRO" id="PR:Q55EU4"/>
<dbReference type="Proteomes" id="UP000002195">
    <property type="component" value="Chromosome 1"/>
</dbReference>
<dbReference type="GO" id="GO:0004674">
    <property type="term" value="F:protein serine/threonine kinase activity"/>
    <property type="evidence" value="ECO:0007669"/>
    <property type="project" value="UniProtKB-KW"/>
</dbReference>
<dbReference type="CDD" id="cd05124">
    <property type="entry name" value="AFK"/>
    <property type="match status" value="1"/>
</dbReference>
<dbReference type="Gene3D" id="1.10.1070.11">
    <property type="entry name" value="Phosphatidylinositol 3-/4-kinase, catalytic domain"/>
    <property type="match status" value="1"/>
</dbReference>
<dbReference type="Gene3D" id="3.30.1010.10">
    <property type="entry name" value="Phosphatidylinositol 3-kinase Catalytic Subunit, Chain A, domain 4"/>
    <property type="match status" value="1"/>
</dbReference>
<dbReference type="InterPro" id="IPR015275">
    <property type="entry name" value="Actin-fragmin_kin_cat_dom"/>
</dbReference>
<dbReference type="InterPro" id="IPR011009">
    <property type="entry name" value="Kinase-like_dom_sf"/>
</dbReference>
<dbReference type="InterPro" id="IPR036940">
    <property type="entry name" value="PI3/4_kinase_cat_sf"/>
</dbReference>
<dbReference type="InterPro" id="IPR037469">
    <property type="entry name" value="Put_AFK"/>
</dbReference>
<dbReference type="PANTHER" id="PTHR38737:SF2">
    <property type="entry name" value="ACTIN-FRAGMIN KINASE DDB_G0268748-RELATED"/>
    <property type="match status" value="1"/>
</dbReference>
<dbReference type="PANTHER" id="PTHR38737">
    <property type="entry name" value="ACTIN-FRAGMIN KINASE DDB_G0279609-RELATED"/>
    <property type="match status" value="1"/>
</dbReference>
<dbReference type="Pfam" id="PF09192">
    <property type="entry name" value="Act-Frag_cataly"/>
    <property type="match status" value="1"/>
</dbReference>
<dbReference type="SUPFAM" id="SSF56112">
    <property type="entry name" value="Protein kinase-like (PK-like)"/>
    <property type="match status" value="1"/>
</dbReference>
<proteinExistence type="inferred from homology"/>
<organism>
    <name type="scientific">Dictyostelium discoideum</name>
    <name type="common">Social amoeba</name>
    <dbReference type="NCBI Taxonomy" id="44689"/>
    <lineage>
        <taxon>Eukaryota</taxon>
        <taxon>Amoebozoa</taxon>
        <taxon>Evosea</taxon>
        <taxon>Eumycetozoa</taxon>
        <taxon>Dictyostelia</taxon>
        <taxon>Dictyosteliales</taxon>
        <taxon>Dictyosteliaceae</taxon>
        <taxon>Dictyostelium</taxon>
    </lineage>
</organism>
<reference key="1">
    <citation type="journal article" date="2005" name="Nature">
        <title>The genome of the social amoeba Dictyostelium discoideum.</title>
        <authorList>
            <person name="Eichinger L."/>
            <person name="Pachebat J.A."/>
            <person name="Gloeckner G."/>
            <person name="Rajandream M.A."/>
            <person name="Sucgang R."/>
            <person name="Berriman M."/>
            <person name="Song J."/>
            <person name="Olsen R."/>
            <person name="Szafranski K."/>
            <person name="Xu Q."/>
            <person name="Tunggal B."/>
            <person name="Kummerfeld S."/>
            <person name="Madera M."/>
            <person name="Konfortov B.A."/>
            <person name="Rivero F."/>
            <person name="Bankier A.T."/>
            <person name="Lehmann R."/>
            <person name="Hamlin N."/>
            <person name="Davies R."/>
            <person name="Gaudet P."/>
            <person name="Fey P."/>
            <person name="Pilcher K."/>
            <person name="Chen G."/>
            <person name="Saunders D."/>
            <person name="Sodergren E.J."/>
            <person name="Davis P."/>
            <person name="Kerhornou A."/>
            <person name="Nie X."/>
            <person name="Hall N."/>
            <person name="Anjard C."/>
            <person name="Hemphill L."/>
            <person name="Bason N."/>
            <person name="Farbrother P."/>
            <person name="Desany B."/>
            <person name="Just E."/>
            <person name="Morio T."/>
            <person name="Rost R."/>
            <person name="Churcher C.M."/>
            <person name="Cooper J."/>
            <person name="Haydock S."/>
            <person name="van Driessche N."/>
            <person name="Cronin A."/>
            <person name="Goodhead I."/>
            <person name="Muzny D.M."/>
            <person name="Mourier T."/>
            <person name="Pain A."/>
            <person name="Lu M."/>
            <person name="Harper D."/>
            <person name="Lindsay R."/>
            <person name="Hauser H."/>
            <person name="James K.D."/>
            <person name="Quiles M."/>
            <person name="Madan Babu M."/>
            <person name="Saito T."/>
            <person name="Buchrieser C."/>
            <person name="Wardroper A."/>
            <person name="Felder M."/>
            <person name="Thangavelu M."/>
            <person name="Johnson D."/>
            <person name="Knights A."/>
            <person name="Loulseged H."/>
            <person name="Mungall K.L."/>
            <person name="Oliver K."/>
            <person name="Price C."/>
            <person name="Quail M.A."/>
            <person name="Urushihara H."/>
            <person name="Hernandez J."/>
            <person name="Rabbinowitsch E."/>
            <person name="Steffen D."/>
            <person name="Sanders M."/>
            <person name="Ma J."/>
            <person name="Kohara Y."/>
            <person name="Sharp S."/>
            <person name="Simmonds M.N."/>
            <person name="Spiegler S."/>
            <person name="Tivey A."/>
            <person name="Sugano S."/>
            <person name="White B."/>
            <person name="Walker D."/>
            <person name="Woodward J.R."/>
            <person name="Winckler T."/>
            <person name="Tanaka Y."/>
            <person name="Shaulsky G."/>
            <person name="Schleicher M."/>
            <person name="Weinstock G.M."/>
            <person name="Rosenthal A."/>
            <person name="Cox E.C."/>
            <person name="Chisholm R.L."/>
            <person name="Gibbs R.A."/>
            <person name="Loomis W.F."/>
            <person name="Platzer M."/>
            <person name="Kay R.R."/>
            <person name="Williams J.G."/>
            <person name="Dear P.H."/>
            <person name="Noegel A.A."/>
            <person name="Barrell B.G."/>
            <person name="Kuspa A."/>
        </authorList>
    </citation>
    <scope>NUCLEOTIDE SEQUENCE [LARGE SCALE GENOMIC DNA]</scope>
    <source>
        <strain>AX4</strain>
    </source>
</reference>
<reference key="2">
    <citation type="journal article" date="2006" name="PLoS Genet.">
        <title>The dictyostelium kinome -- analysis of the protein kinases from a simple model organism.</title>
        <authorList>
            <person name="Goldberg J.M."/>
            <person name="Manning G."/>
            <person name="Liu A."/>
            <person name="Fey P."/>
            <person name="Pilcher K.E."/>
            <person name="Xu Y."/>
            <person name="Smith J.L."/>
        </authorList>
    </citation>
    <scope>GENE FAMILY</scope>
    <scope>NOMENCLATURE</scope>
</reference>
<protein>
    <recommendedName>
        <fullName>Putative actin-fragmin kinase DDB_G0268748</fullName>
        <ecNumber>2.7.11.-</ecNumber>
    </recommendedName>
</protein>
<gene>
    <name type="ORF">DDB_G0268748</name>
</gene>
<sequence>MKTLRELRNKISFDKNIDSGSSSSNIGGSSSNSSGTTNKRSSGNFNGSSASSSPSSSTNIDYNIPTFSNIQNIDWKSISSVEKIDFGNSNIFLLITFNNNNNINNINNLNCNCVNNNNNNICNNNCINNNNNTNDENPSIINNYNESQILLKSSSTIAHDVYAYVLEGILKYPIPEMRLLDFSNLEYTEMSYNLLIHSKDDQSLNDFIKSELEKSFFLILEYRNNGKRFNELNHKEYFSGSKGGKKFKQLGKIIAFDIFCNNFCKLPSPPLNWNSSTFFSNILCYDSPDKNGWYFSLINSNISFLNTSPFTIGYRDHLNRLKLLLFSIFQNPSTESVQIKLMRDHLLKCQGIKLSGSSVSYLQKGIAKGIKSIVNCINFTVLENTKEKVKNIVKLDNNNIWKKSIDSIYCPFLLDVLNEIVIEFANYREKTYFIKA</sequence>